<comment type="function">
    <text evidence="1">Catalyzes the synthesis of activated sulfate.</text>
</comment>
<comment type="catalytic activity">
    <reaction evidence="1">
        <text>adenosine 5'-phosphosulfate + ATP = 3'-phosphoadenylyl sulfate + ADP + H(+)</text>
        <dbReference type="Rhea" id="RHEA:24152"/>
        <dbReference type="ChEBI" id="CHEBI:15378"/>
        <dbReference type="ChEBI" id="CHEBI:30616"/>
        <dbReference type="ChEBI" id="CHEBI:58243"/>
        <dbReference type="ChEBI" id="CHEBI:58339"/>
        <dbReference type="ChEBI" id="CHEBI:456216"/>
        <dbReference type="EC" id="2.7.1.25"/>
    </reaction>
</comment>
<comment type="pathway">
    <text evidence="1">Sulfur metabolism; hydrogen sulfide biosynthesis; sulfite from sulfate: step 2/3.</text>
</comment>
<comment type="similarity">
    <text evidence="1">Belongs to the APS kinase family.</text>
</comment>
<reference key="1">
    <citation type="journal article" date="2009" name="PLoS Genet.">
        <title>Organised genome dynamics in the Escherichia coli species results in highly diverse adaptive paths.</title>
        <authorList>
            <person name="Touchon M."/>
            <person name="Hoede C."/>
            <person name="Tenaillon O."/>
            <person name="Barbe V."/>
            <person name="Baeriswyl S."/>
            <person name="Bidet P."/>
            <person name="Bingen E."/>
            <person name="Bonacorsi S."/>
            <person name="Bouchier C."/>
            <person name="Bouvet O."/>
            <person name="Calteau A."/>
            <person name="Chiapello H."/>
            <person name="Clermont O."/>
            <person name="Cruveiller S."/>
            <person name="Danchin A."/>
            <person name="Diard M."/>
            <person name="Dossat C."/>
            <person name="Karoui M.E."/>
            <person name="Frapy E."/>
            <person name="Garry L."/>
            <person name="Ghigo J.M."/>
            <person name="Gilles A.M."/>
            <person name="Johnson J."/>
            <person name="Le Bouguenec C."/>
            <person name="Lescat M."/>
            <person name="Mangenot S."/>
            <person name="Martinez-Jehanne V."/>
            <person name="Matic I."/>
            <person name="Nassif X."/>
            <person name="Oztas S."/>
            <person name="Petit M.A."/>
            <person name="Pichon C."/>
            <person name="Rouy Z."/>
            <person name="Ruf C.S."/>
            <person name="Schneider D."/>
            <person name="Tourret J."/>
            <person name="Vacherie B."/>
            <person name="Vallenet D."/>
            <person name="Medigue C."/>
            <person name="Rocha E.P.C."/>
            <person name="Denamur E."/>
        </authorList>
    </citation>
    <scope>NUCLEOTIDE SEQUENCE [LARGE SCALE GENOMIC DNA]</scope>
    <source>
        <strain>55989 / EAEC</strain>
    </source>
</reference>
<dbReference type="EC" id="2.7.1.25" evidence="1"/>
<dbReference type="EMBL" id="CU928145">
    <property type="protein sequence ID" value="CAU98905.1"/>
    <property type="molecule type" value="Genomic_DNA"/>
</dbReference>
<dbReference type="RefSeq" id="WP_001173673.1">
    <property type="nucleotide sequence ID" value="NC_011748.1"/>
</dbReference>
<dbReference type="SMR" id="B7LEG8"/>
<dbReference type="GeneID" id="93779256"/>
<dbReference type="KEGG" id="eck:EC55989_3023"/>
<dbReference type="HOGENOM" id="CLU_046932_1_0_6"/>
<dbReference type="UniPathway" id="UPA00140">
    <property type="reaction ID" value="UER00205"/>
</dbReference>
<dbReference type="Proteomes" id="UP000000746">
    <property type="component" value="Chromosome"/>
</dbReference>
<dbReference type="GO" id="GO:0004020">
    <property type="term" value="F:adenylylsulfate kinase activity"/>
    <property type="evidence" value="ECO:0007669"/>
    <property type="project" value="UniProtKB-UniRule"/>
</dbReference>
<dbReference type="GO" id="GO:0005524">
    <property type="term" value="F:ATP binding"/>
    <property type="evidence" value="ECO:0007669"/>
    <property type="project" value="UniProtKB-UniRule"/>
</dbReference>
<dbReference type="GO" id="GO:0070814">
    <property type="term" value="P:hydrogen sulfide biosynthetic process"/>
    <property type="evidence" value="ECO:0007669"/>
    <property type="project" value="UniProtKB-UniRule"/>
</dbReference>
<dbReference type="GO" id="GO:0000103">
    <property type="term" value="P:sulfate assimilation"/>
    <property type="evidence" value="ECO:0007669"/>
    <property type="project" value="UniProtKB-UniRule"/>
</dbReference>
<dbReference type="CDD" id="cd02027">
    <property type="entry name" value="APSK"/>
    <property type="match status" value="1"/>
</dbReference>
<dbReference type="FunFam" id="3.40.50.300:FF:000212">
    <property type="entry name" value="Adenylyl-sulfate kinase"/>
    <property type="match status" value="1"/>
</dbReference>
<dbReference type="Gene3D" id="3.40.50.300">
    <property type="entry name" value="P-loop containing nucleotide triphosphate hydrolases"/>
    <property type="match status" value="1"/>
</dbReference>
<dbReference type="HAMAP" id="MF_00065">
    <property type="entry name" value="Adenylyl_sulf_kinase"/>
    <property type="match status" value="1"/>
</dbReference>
<dbReference type="InterPro" id="IPR002891">
    <property type="entry name" value="APS_kinase"/>
</dbReference>
<dbReference type="InterPro" id="IPR027417">
    <property type="entry name" value="P-loop_NTPase"/>
</dbReference>
<dbReference type="NCBIfam" id="TIGR00455">
    <property type="entry name" value="apsK"/>
    <property type="match status" value="1"/>
</dbReference>
<dbReference type="NCBIfam" id="NF003013">
    <property type="entry name" value="PRK03846.1"/>
    <property type="match status" value="1"/>
</dbReference>
<dbReference type="PANTHER" id="PTHR11055:SF63">
    <property type="entry name" value="ADENYLYL-SULFATE KINASE 1, CHLOROPLASTIC"/>
    <property type="match status" value="1"/>
</dbReference>
<dbReference type="PANTHER" id="PTHR11055">
    <property type="entry name" value="BIFUNCTIONAL 3'-PHOSPHOADENOSINE 5'-PHOSPHOSULFATE SYNTHASE"/>
    <property type="match status" value="1"/>
</dbReference>
<dbReference type="Pfam" id="PF01583">
    <property type="entry name" value="APS_kinase"/>
    <property type="match status" value="1"/>
</dbReference>
<dbReference type="SUPFAM" id="SSF52540">
    <property type="entry name" value="P-loop containing nucleoside triphosphate hydrolases"/>
    <property type="match status" value="1"/>
</dbReference>
<evidence type="ECO:0000255" key="1">
    <source>
        <dbReference type="HAMAP-Rule" id="MF_00065"/>
    </source>
</evidence>
<organism>
    <name type="scientific">Escherichia coli (strain 55989 / EAEC)</name>
    <dbReference type="NCBI Taxonomy" id="585055"/>
    <lineage>
        <taxon>Bacteria</taxon>
        <taxon>Pseudomonadati</taxon>
        <taxon>Pseudomonadota</taxon>
        <taxon>Gammaproteobacteria</taxon>
        <taxon>Enterobacterales</taxon>
        <taxon>Enterobacteriaceae</taxon>
        <taxon>Escherichia</taxon>
    </lineage>
</organism>
<accession>B7LEG8</accession>
<protein>
    <recommendedName>
        <fullName evidence="1">Adenylyl-sulfate kinase</fullName>
        <ecNumber evidence="1">2.7.1.25</ecNumber>
    </recommendedName>
    <alternativeName>
        <fullName evidence="1">APS kinase</fullName>
    </alternativeName>
    <alternativeName>
        <fullName evidence="1">ATP adenosine-5'-phosphosulfate 3'-phosphotransferase</fullName>
    </alternativeName>
    <alternativeName>
        <fullName evidence="1">Adenosine-5'-phosphosulfate kinase</fullName>
    </alternativeName>
</protein>
<keyword id="KW-0067">ATP-binding</keyword>
<keyword id="KW-0418">Kinase</keyword>
<keyword id="KW-0547">Nucleotide-binding</keyword>
<keyword id="KW-0597">Phosphoprotein</keyword>
<keyword id="KW-1185">Reference proteome</keyword>
<keyword id="KW-0808">Transferase</keyword>
<name>CYSC_ECO55</name>
<gene>
    <name evidence="1" type="primary">cysC</name>
    <name type="ordered locus">EC55989_3023</name>
</gene>
<feature type="chain" id="PRO_1000117952" description="Adenylyl-sulfate kinase">
    <location>
        <begin position="1"/>
        <end position="201"/>
    </location>
</feature>
<feature type="active site" description="Phosphoserine intermediate" evidence="1">
    <location>
        <position position="109"/>
    </location>
</feature>
<feature type="binding site" evidence="1">
    <location>
        <begin position="35"/>
        <end position="42"/>
    </location>
    <ligand>
        <name>ATP</name>
        <dbReference type="ChEBI" id="CHEBI:30616"/>
    </ligand>
</feature>
<proteinExistence type="inferred from homology"/>
<sequence length="201" mass="22321">MALHDENVVWHSHPVTVQQRELHHGHRGVVLWFTGLSGSGKSTVAGALEEALHKLGVSTYLLDGDNVRHGLCSDLGFSDADRKENIRRVGEVANLMVEAGLVVLTAFISPHRAERQMVRERVGEGRFIEVFVDTPLAICEARDPKGLYKKARAGELRNFTGIDSVYEAPESAEIHLNGEQLVTNLVQQLLDLLRQNDIIRS</sequence>